<reference key="1">
    <citation type="online journal article" date="1995" name="Plant Gene Register">
        <title>Isolation of an Arabidopsis cDNA encoding 3-ketoacyl-acyl carrier protein synthase I.1.</title>
        <authorList>
            <person name="Millar A.A."/>
            <person name="Kunst L."/>
        </authorList>
        <locator>PGR95-027</locator>
    </citation>
    <scope>NUCLEOTIDE SEQUENCE [MRNA] (ISOFORM 1)</scope>
    <source>
        <strain>cv. Columbia</strain>
    </source>
</reference>
<reference key="2">
    <citation type="journal article" date="1998" name="DNA Res.">
        <title>Structural analysis of Arabidopsis thaliana chromosome 5. V. Sequence features of the regions of 1,381,565 bp covered by twenty one physically assigned P1 and TAC clones.</title>
        <authorList>
            <person name="Kaneko T."/>
            <person name="Kotani H."/>
            <person name="Nakamura Y."/>
            <person name="Sato S."/>
            <person name="Asamizu E."/>
            <person name="Miyajima N."/>
            <person name="Tabata S."/>
        </authorList>
    </citation>
    <scope>NUCLEOTIDE SEQUENCE [LARGE SCALE GENOMIC DNA]</scope>
    <source>
        <strain>cv. Columbia</strain>
    </source>
</reference>
<reference key="3">
    <citation type="journal article" date="2017" name="Plant J.">
        <title>Araport11: a complete reannotation of the Arabidopsis thaliana reference genome.</title>
        <authorList>
            <person name="Cheng C.Y."/>
            <person name="Krishnakumar V."/>
            <person name="Chan A.P."/>
            <person name="Thibaud-Nissen F."/>
            <person name="Schobel S."/>
            <person name="Town C.D."/>
        </authorList>
    </citation>
    <scope>GENOME REANNOTATION</scope>
    <source>
        <strain>cv. Columbia</strain>
    </source>
</reference>
<reference key="4">
    <citation type="journal article" date="2003" name="Science">
        <title>Empirical analysis of transcriptional activity in the Arabidopsis genome.</title>
        <authorList>
            <person name="Yamada K."/>
            <person name="Lim J."/>
            <person name="Dale J.M."/>
            <person name="Chen H."/>
            <person name="Shinn P."/>
            <person name="Palm C.J."/>
            <person name="Southwick A.M."/>
            <person name="Wu H.C."/>
            <person name="Kim C.J."/>
            <person name="Nguyen M."/>
            <person name="Pham P.K."/>
            <person name="Cheuk R.F."/>
            <person name="Karlin-Newmann G."/>
            <person name="Liu S.X."/>
            <person name="Lam B."/>
            <person name="Sakano H."/>
            <person name="Wu T."/>
            <person name="Yu G."/>
            <person name="Miranda M."/>
            <person name="Quach H.L."/>
            <person name="Tripp M."/>
            <person name="Chang C.H."/>
            <person name="Lee J.M."/>
            <person name="Toriumi M.J."/>
            <person name="Chan M.M."/>
            <person name="Tang C.C."/>
            <person name="Onodera C.S."/>
            <person name="Deng J.M."/>
            <person name="Akiyama K."/>
            <person name="Ansari Y."/>
            <person name="Arakawa T."/>
            <person name="Banh J."/>
            <person name="Banno F."/>
            <person name="Bowser L."/>
            <person name="Brooks S.Y."/>
            <person name="Carninci P."/>
            <person name="Chao Q."/>
            <person name="Choy N."/>
            <person name="Enju A."/>
            <person name="Goldsmith A.D."/>
            <person name="Gurjal M."/>
            <person name="Hansen N.F."/>
            <person name="Hayashizaki Y."/>
            <person name="Johnson-Hopson C."/>
            <person name="Hsuan V.W."/>
            <person name="Iida K."/>
            <person name="Karnes M."/>
            <person name="Khan S."/>
            <person name="Koesema E."/>
            <person name="Ishida J."/>
            <person name="Jiang P.X."/>
            <person name="Jones T."/>
            <person name="Kawai J."/>
            <person name="Kamiya A."/>
            <person name="Meyers C."/>
            <person name="Nakajima M."/>
            <person name="Narusaka M."/>
            <person name="Seki M."/>
            <person name="Sakurai T."/>
            <person name="Satou M."/>
            <person name="Tamse R."/>
            <person name="Vaysberg M."/>
            <person name="Wallender E.K."/>
            <person name="Wong C."/>
            <person name="Yamamura Y."/>
            <person name="Yuan S."/>
            <person name="Shinozaki K."/>
            <person name="Davis R.W."/>
            <person name="Theologis A."/>
            <person name="Ecker J.R."/>
        </authorList>
    </citation>
    <scope>NUCLEOTIDE SEQUENCE [LARGE SCALE MRNA] (ISOFORM 1)</scope>
    <source>
        <strain>cv. Columbia</strain>
    </source>
</reference>
<reference key="5">
    <citation type="submission" date="2002-03" db="EMBL/GenBank/DDBJ databases">
        <title>Full-length cDNA from Arabidopsis thaliana.</title>
        <authorList>
            <person name="Brover V.V."/>
            <person name="Troukhan M.E."/>
            <person name="Alexandrov N.A."/>
            <person name="Lu Y.-P."/>
            <person name="Flavell R.B."/>
            <person name="Feldmann K.A."/>
        </authorList>
    </citation>
    <scope>NUCLEOTIDE SEQUENCE [LARGE SCALE MRNA] (ISOFORM 1)</scope>
</reference>
<reference key="6">
    <citation type="journal article" date="2007" name="Mol. Cell. Proteomics">
        <title>Multidimensional protein identification technology (MudPIT) analysis of ubiquitinated proteins in plants.</title>
        <authorList>
            <person name="Maor R."/>
            <person name="Jones A."/>
            <person name="Nuehse T.S."/>
            <person name="Studholme D.J."/>
            <person name="Peck S.C."/>
            <person name="Shirasu K."/>
        </authorList>
    </citation>
    <scope>IDENTIFICATION BY MASS SPECTROMETRY [LARGE SCALE ANALYSIS]</scope>
    <source>
        <strain>cv. Landsberg erecta</strain>
    </source>
</reference>
<reference key="7">
    <citation type="journal article" date="2008" name="PLoS ONE">
        <title>Sorting signals, N-terminal modifications and abundance of the chloroplast proteome.</title>
        <authorList>
            <person name="Zybailov B."/>
            <person name="Rutschow H."/>
            <person name="Friso G."/>
            <person name="Rudella A."/>
            <person name="Emanuelsson O."/>
            <person name="Sun Q."/>
            <person name="van Wijk K.J."/>
        </authorList>
    </citation>
    <scope>IDENTIFICATION BY MASS SPECTROMETRY</scope>
    <scope>SUBCELLULAR LOCATION [LARGE SCALE ANALYSIS]</scope>
</reference>
<protein>
    <recommendedName>
        <fullName>3-oxoacyl-[acyl-carrier-protein] synthase I, chloroplastic</fullName>
        <ecNumber>2.3.1.41</ecNumber>
    </recommendedName>
    <alternativeName>
        <fullName>Beta-ketoacyl-ACP synthase I</fullName>
        <shortName>KAS I</shortName>
    </alternativeName>
</protein>
<evidence type="ECO:0000250" key="1"/>
<evidence type="ECO:0000255" key="2"/>
<evidence type="ECO:0000255" key="3">
    <source>
        <dbReference type="PROSITE-ProRule" id="PRU01348"/>
    </source>
</evidence>
<evidence type="ECO:0000256" key="4">
    <source>
        <dbReference type="SAM" id="MobiDB-lite"/>
    </source>
</evidence>
<evidence type="ECO:0000269" key="5">
    <source>
    </source>
</evidence>
<evidence type="ECO:0000305" key="6"/>
<comment type="function">
    <text evidence="1">Catalyzes the condensation reaction of fatty acid synthesis by the addition to an acyl acceptor of two carbons from malonyl-ACP. Specific for elongation from C-10 to unsaturated C-16 and C-18 fatty acids (By similarity).</text>
</comment>
<comment type="catalytic activity">
    <reaction>
        <text>a fatty acyl-[ACP] + malonyl-[ACP] + H(+) = a 3-oxoacyl-[ACP] + holo-[ACP] + CO2</text>
        <dbReference type="Rhea" id="RHEA:22836"/>
        <dbReference type="Rhea" id="RHEA-COMP:9623"/>
        <dbReference type="Rhea" id="RHEA-COMP:9685"/>
        <dbReference type="Rhea" id="RHEA-COMP:9916"/>
        <dbReference type="Rhea" id="RHEA-COMP:14125"/>
        <dbReference type="ChEBI" id="CHEBI:15378"/>
        <dbReference type="ChEBI" id="CHEBI:16526"/>
        <dbReference type="ChEBI" id="CHEBI:64479"/>
        <dbReference type="ChEBI" id="CHEBI:78449"/>
        <dbReference type="ChEBI" id="CHEBI:78776"/>
        <dbReference type="ChEBI" id="CHEBI:138651"/>
        <dbReference type="EC" id="2.3.1.41"/>
    </reaction>
</comment>
<comment type="subunit">
    <text evidence="1">Homodimer.</text>
</comment>
<comment type="subcellular location">
    <subcellularLocation>
        <location evidence="5">Plastid</location>
        <location evidence="5">Chloroplast stroma</location>
    </subcellularLocation>
</comment>
<comment type="alternative products">
    <event type="alternative splicing"/>
    <isoform>
        <id>P52410-1</id>
        <name>1</name>
        <sequence type="displayed"/>
    </isoform>
    <isoform>
        <id>P52410-2</id>
        <name>2</name>
        <sequence type="described" ref="VSP_040746"/>
    </isoform>
</comment>
<comment type="similarity">
    <text evidence="6">Belongs to the thiolase-like superfamily. Beta-ketoacyl-ACP synthases family.</text>
</comment>
<sequence length="473" mass="50413">MQALQSSSLRASPPNPLRLPSNRQSHQLITNARPLRRQQRSFISASASTVSAPKRETDPKKRVVITGMGLVSVFGNDVDAYYEKLLSGESGISLIDRFDASKFPTRFGGQIRGFSSEGYIDGKNERRLDDCLKYCIVAGKKALESANLGGDKLNTIDKRKAGVLVGTGMGGLTVFSEGVQNLIEKGHRRISPFFIPYAITNMGSALLAIDLGLMGPNYSISTACATSNYCFYAAANHIRRGEADMMIAGGTEAAIIPIGLGGFVACRALSQRNDDPQTASRPWDKARDGFVMGEGAGVLVMESLEHAMKRGAPIVAEYLGGAVNCDAHHMTDPRADGLGVSSCIERCLEDAGVSPEEVNYINAHATSTLAGDLAEINAIKKVFKSTSGIKINATKSMIGHCLGAAGGLEAIATVKAINTGWLHPSINQFNPEQAVDFDTVPNEKKQHEVDVAISNSFGFGGHNSVVAFSAFKP</sequence>
<feature type="transit peptide" description="Chloroplast" evidence="2">
    <location>
        <begin position="1"/>
        <end position="46"/>
    </location>
</feature>
<feature type="chain" id="PRO_0000000586" description="3-oxoacyl-[acyl-carrier-protein] synthase I, chloroplastic">
    <location>
        <begin position="47"/>
        <end position="473"/>
    </location>
</feature>
<feature type="domain" description="Ketosynthase family 3 (KS3)" evidence="3">
    <location>
        <begin position="60"/>
        <end position="470"/>
    </location>
</feature>
<feature type="region of interest" description="Disordered" evidence="4">
    <location>
        <begin position="1"/>
        <end position="26"/>
    </location>
</feature>
<feature type="compositionally biased region" description="Polar residues" evidence="4">
    <location>
        <begin position="1"/>
        <end position="10"/>
    </location>
</feature>
<feature type="active site" description="For beta-ketoacyl synthase activity" evidence="3">
    <location>
        <position position="224"/>
    </location>
</feature>
<feature type="active site" description="For beta-ketoacyl synthase activity" evidence="3">
    <location>
        <position position="364"/>
    </location>
</feature>
<feature type="active site" description="For beta-ketoacyl synthase activity" evidence="3">
    <location>
        <position position="400"/>
    </location>
</feature>
<feature type="splice variant" id="VSP_040746" description="In isoform 2." evidence="6">
    <location>
        <begin position="198"/>
        <end position="252"/>
    </location>
</feature>
<feature type="sequence conflict" description="In Ref. 1; AAC49118." evidence="6" ref="1">
    <original>F</original>
    <variation>C</variation>
    <location>
        <position position="74"/>
    </location>
</feature>
<feature type="sequence conflict" description="In Ref. 1; AAC49118." evidence="6" ref="1">
    <original>IR</original>
    <variation>NH</variation>
    <location>
        <begin position="238"/>
        <end position="239"/>
    </location>
</feature>
<accession>P52410</accession>
<accession>Q2V312</accession>
<accession>Q9FL32</accession>
<name>KASC1_ARATH</name>
<organism>
    <name type="scientific">Arabidopsis thaliana</name>
    <name type="common">Mouse-ear cress</name>
    <dbReference type="NCBI Taxonomy" id="3702"/>
    <lineage>
        <taxon>Eukaryota</taxon>
        <taxon>Viridiplantae</taxon>
        <taxon>Streptophyta</taxon>
        <taxon>Embryophyta</taxon>
        <taxon>Tracheophyta</taxon>
        <taxon>Spermatophyta</taxon>
        <taxon>Magnoliopsida</taxon>
        <taxon>eudicotyledons</taxon>
        <taxon>Gunneridae</taxon>
        <taxon>Pentapetalae</taxon>
        <taxon>rosids</taxon>
        <taxon>malvids</taxon>
        <taxon>Brassicales</taxon>
        <taxon>Brassicaceae</taxon>
        <taxon>Camelineae</taxon>
        <taxon>Arabidopsis</taxon>
    </lineage>
</organism>
<keyword id="KW-0012">Acyltransferase</keyword>
<keyword id="KW-0025">Alternative splicing</keyword>
<keyword id="KW-0150">Chloroplast</keyword>
<keyword id="KW-0275">Fatty acid biosynthesis</keyword>
<keyword id="KW-0276">Fatty acid metabolism</keyword>
<keyword id="KW-0444">Lipid biosynthesis</keyword>
<keyword id="KW-0443">Lipid metabolism</keyword>
<keyword id="KW-0934">Plastid</keyword>
<keyword id="KW-1185">Reference proteome</keyword>
<keyword id="KW-0808">Transferase</keyword>
<keyword id="KW-0809">Transit peptide</keyword>
<gene>
    <name type="primary">KAS1</name>
    <name type="ordered locus">At5g46290</name>
    <name type="ORF">MPL12.7</name>
</gene>
<proteinExistence type="evidence at protein level"/>
<dbReference type="EC" id="2.3.1.41"/>
<dbReference type="EMBL" id="U24177">
    <property type="protein sequence ID" value="AAC49118.1"/>
    <property type="molecule type" value="mRNA"/>
</dbReference>
<dbReference type="EMBL" id="AB010698">
    <property type="protein sequence ID" value="BAB11084.1"/>
    <property type="molecule type" value="Genomic_DNA"/>
</dbReference>
<dbReference type="EMBL" id="CP002688">
    <property type="protein sequence ID" value="AED95363.1"/>
    <property type="molecule type" value="Genomic_DNA"/>
</dbReference>
<dbReference type="EMBL" id="CP002688">
    <property type="protein sequence ID" value="AED95364.1"/>
    <property type="molecule type" value="Genomic_DNA"/>
</dbReference>
<dbReference type="EMBL" id="AY037261">
    <property type="protein sequence ID" value="AAK59862.1"/>
    <property type="molecule type" value="mRNA"/>
</dbReference>
<dbReference type="EMBL" id="AY094005">
    <property type="protein sequence ID" value="AAM16266.1"/>
    <property type="molecule type" value="mRNA"/>
</dbReference>
<dbReference type="EMBL" id="AY123979">
    <property type="protein sequence ID" value="AAM74493.1"/>
    <property type="molecule type" value="mRNA"/>
</dbReference>
<dbReference type="EMBL" id="AY087843">
    <property type="protein sequence ID" value="AAM65396.1"/>
    <property type="molecule type" value="mRNA"/>
</dbReference>
<dbReference type="RefSeq" id="NP_001032018.1">
    <molecule id="P52410-2"/>
    <property type="nucleotide sequence ID" value="NM_001036941.1"/>
</dbReference>
<dbReference type="RefSeq" id="NP_199441.1">
    <molecule id="P52410-1"/>
    <property type="nucleotide sequence ID" value="NM_123998.3"/>
</dbReference>
<dbReference type="SMR" id="P52410"/>
<dbReference type="BioGRID" id="19920">
    <property type="interactions" value="1"/>
</dbReference>
<dbReference type="FunCoup" id="P52410">
    <property type="interactions" value="843"/>
</dbReference>
<dbReference type="STRING" id="3702.P52410"/>
<dbReference type="iPTMnet" id="P52410"/>
<dbReference type="PaxDb" id="3702-AT5G46290.3"/>
<dbReference type="ProteomicsDB" id="250616">
    <molecule id="P52410-1"/>
</dbReference>
<dbReference type="EnsemblPlants" id="AT5G46290.1">
    <molecule id="P52410-1"/>
    <property type="protein sequence ID" value="AT5G46290.1"/>
    <property type="gene ID" value="AT5G46290"/>
</dbReference>
<dbReference type="EnsemblPlants" id="AT5G46290.2">
    <molecule id="P52410-2"/>
    <property type="protein sequence ID" value="AT5G46290.2"/>
    <property type="gene ID" value="AT5G46290"/>
</dbReference>
<dbReference type="GeneID" id="834671"/>
<dbReference type="Gramene" id="AT5G46290.1">
    <molecule id="P52410-1"/>
    <property type="protein sequence ID" value="AT5G46290.1"/>
    <property type="gene ID" value="AT5G46290"/>
</dbReference>
<dbReference type="Gramene" id="AT5G46290.2">
    <molecule id="P52410-2"/>
    <property type="protein sequence ID" value="AT5G46290.2"/>
    <property type="gene ID" value="AT5G46290"/>
</dbReference>
<dbReference type="KEGG" id="ath:AT5G46290"/>
<dbReference type="Araport" id="AT5G46290"/>
<dbReference type="TAIR" id="AT5G46290">
    <property type="gene designation" value="KASI"/>
</dbReference>
<dbReference type="eggNOG" id="KOG1394">
    <property type="taxonomic scope" value="Eukaryota"/>
</dbReference>
<dbReference type="HOGENOM" id="CLU_000022_69_2_1"/>
<dbReference type="InParanoid" id="P52410"/>
<dbReference type="OMA" id="TACSIGN"/>
<dbReference type="OrthoDB" id="1047353at2759"/>
<dbReference type="PhylomeDB" id="P52410"/>
<dbReference type="BioCyc" id="ARA:AT5G46290-MONOMER"/>
<dbReference type="BioCyc" id="MetaCyc:AT5G46290-MONOMER"/>
<dbReference type="BRENDA" id="2.3.1.41">
    <property type="organism ID" value="399"/>
</dbReference>
<dbReference type="CD-CODE" id="4299E36E">
    <property type="entry name" value="Nucleolus"/>
</dbReference>
<dbReference type="PRO" id="PR:P52410"/>
<dbReference type="Proteomes" id="UP000006548">
    <property type="component" value="Chromosome 5"/>
</dbReference>
<dbReference type="ExpressionAtlas" id="P52410">
    <property type="expression patterns" value="baseline and differential"/>
</dbReference>
<dbReference type="GO" id="GO:0009570">
    <property type="term" value="C:chloroplast stroma"/>
    <property type="evidence" value="ECO:0007669"/>
    <property type="project" value="UniProtKB-SubCell"/>
</dbReference>
<dbReference type="GO" id="GO:0004315">
    <property type="term" value="F:3-oxoacyl-[acyl-carrier-protein] synthase activity"/>
    <property type="evidence" value="ECO:0007669"/>
    <property type="project" value="UniProtKB-EC"/>
</dbReference>
<dbReference type="GO" id="GO:0006633">
    <property type="term" value="P:fatty acid biosynthetic process"/>
    <property type="evidence" value="ECO:0007669"/>
    <property type="project" value="UniProtKB-KW"/>
</dbReference>
<dbReference type="CDD" id="cd00834">
    <property type="entry name" value="KAS_I_II"/>
    <property type="match status" value="1"/>
</dbReference>
<dbReference type="FunFam" id="3.40.47.10:FF:000027">
    <property type="entry name" value="3-oxoacyl-[acyl-carrier-protein] synthase 2"/>
    <property type="match status" value="1"/>
</dbReference>
<dbReference type="Gene3D" id="3.40.47.10">
    <property type="match status" value="1"/>
</dbReference>
<dbReference type="InterPro" id="IPR017568">
    <property type="entry name" value="3-oxoacyl-ACP_synth-2"/>
</dbReference>
<dbReference type="InterPro" id="IPR000794">
    <property type="entry name" value="Beta-ketoacyl_synthase"/>
</dbReference>
<dbReference type="InterPro" id="IPR018201">
    <property type="entry name" value="Ketoacyl_synth_AS"/>
</dbReference>
<dbReference type="InterPro" id="IPR014031">
    <property type="entry name" value="Ketoacyl_synth_C"/>
</dbReference>
<dbReference type="InterPro" id="IPR014030">
    <property type="entry name" value="Ketoacyl_synth_N"/>
</dbReference>
<dbReference type="InterPro" id="IPR020841">
    <property type="entry name" value="PKS_Beta-ketoAc_synthase_dom"/>
</dbReference>
<dbReference type="InterPro" id="IPR016039">
    <property type="entry name" value="Thiolase-like"/>
</dbReference>
<dbReference type="NCBIfam" id="TIGR03150">
    <property type="entry name" value="fabF"/>
    <property type="match status" value="1"/>
</dbReference>
<dbReference type="NCBIfam" id="NF004970">
    <property type="entry name" value="PRK06333.1"/>
    <property type="match status" value="1"/>
</dbReference>
<dbReference type="NCBIfam" id="NF005589">
    <property type="entry name" value="PRK07314.1"/>
    <property type="match status" value="1"/>
</dbReference>
<dbReference type="PANTHER" id="PTHR11712:SF336">
    <property type="entry name" value="3-OXOACYL-[ACYL-CARRIER-PROTEIN] SYNTHASE, MITOCHONDRIAL"/>
    <property type="match status" value="1"/>
</dbReference>
<dbReference type="PANTHER" id="PTHR11712">
    <property type="entry name" value="POLYKETIDE SYNTHASE-RELATED"/>
    <property type="match status" value="1"/>
</dbReference>
<dbReference type="Pfam" id="PF00109">
    <property type="entry name" value="ketoacyl-synt"/>
    <property type="match status" value="1"/>
</dbReference>
<dbReference type="Pfam" id="PF02801">
    <property type="entry name" value="Ketoacyl-synt_C"/>
    <property type="match status" value="1"/>
</dbReference>
<dbReference type="SMART" id="SM00825">
    <property type="entry name" value="PKS_KS"/>
    <property type="match status" value="1"/>
</dbReference>
<dbReference type="SUPFAM" id="SSF53901">
    <property type="entry name" value="Thiolase-like"/>
    <property type="match status" value="2"/>
</dbReference>
<dbReference type="PROSITE" id="PS00606">
    <property type="entry name" value="KS3_1"/>
    <property type="match status" value="1"/>
</dbReference>
<dbReference type="PROSITE" id="PS52004">
    <property type="entry name" value="KS3_2"/>
    <property type="match status" value="1"/>
</dbReference>